<comment type="function">
    <text>mRNA splicing factors, PRP9, PRP11, and PRP21, are necessary for binding of the U2 snRNP to the pre-mRNA in an early step of spliceosome assembly.</text>
</comment>
<comment type="subunit">
    <text evidence="2">Belongs to the CWC complex (or CEF1-associated complex), a spliceosome sub-complex reminiscent of a late-stage spliceosome composed of the U2, U5 and U6 snRNAs and at least BUD13, BUD31, BRR2, CDC40, CEF1, CLF1, CUS1, CWC2, CWC15, CWC21, CWC22, CWC23, CWC24, CWC25, CWC27, ECM2, HSH155, IST3, ISY1, LEA1, MSL1, NTC20, PRP8, PRP9, PRP11, PRP19, PRP21, PRP22, PRP45, PRP46, SLU7, SMB1, SMD1, SMD2, SMD3, SMX2, SMX3, SNT309, SNU114, SPP2, SYF1, SYF2, RSE1 and YJU2.</text>
</comment>
<comment type="interaction">
    <interactant intactId="EBI-603">
        <id>P32524</id>
    </interactant>
    <interactant intactId="EBI-688">
        <id>Q07350</id>
        <label>PRP11</label>
    </interactant>
    <organismsDiffer>false</organismsDiffer>
    <experiments>8</experiments>
</comment>
<comment type="subcellular location">
    <subcellularLocation>
        <location>Nucleus</location>
    </subcellularLocation>
</comment>
<comment type="miscellaneous">
    <text evidence="3">Present with 2490 molecules/cell in log phase SD medium.</text>
</comment>
<sequence length="280" mass="33052">MEPEDTQLKEDIKTTVNYIKQHGVEFENKLLEDERFSFIKKDDPLHEYYTKLMNEPTDTVSGEDNDRKSEREIARPPDFLFSQYDTGISRRDMEVIKLTARYYAKDKSIVEQMISKDGEARLNFMNSSHPLHKTFTDFVAQYKRVYSFTGQEIKKSKRTILDNCFERTQYWEFEKDKDREHDKLVELCKIQFAAIPWDKFTQVAKFSIPEDTEIFEGSLDLEQMRLRRVQTGIKLFDSIKPTNEEEKIVSDQGKQKGGDSKGKKRKIRAVGETRLKKSKK</sequence>
<gene>
    <name type="primary">PRP21</name>
    <name type="synonym">SPP91</name>
    <name type="ordered locus">YJL203W</name>
    <name type="ORF">J0322</name>
</gene>
<accession>P32524</accession>
<accession>D6VVZ1</accession>
<accession>Q6Q5G7</accession>
<protein>
    <recommendedName>
        <fullName>Pre-mRNA-splicing factor PRP21</fullName>
    </recommendedName>
</protein>
<keyword id="KW-0002">3D-structure</keyword>
<keyword id="KW-0507">mRNA processing</keyword>
<keyword id="KW-0508">mRNA splicing</keyword>
<keyword id="KW-0539">Nucleus</keyword>
<keyword id="KW-1185">Reference proteome</keyword>
<keyword id="KW-0677">Repeat</keyword>
<keyword id="KW-0747">Spliceosome</keyword>
<proteinExistence type="evidence at protein level"/>
<reference key="1">
    <citation type="journal article" date="1992" name="EMBO J.">
        <title>A novel gene, spp91-1, suppresses the splicing defect and the pre-mRNA nuclear export in the prp9-1 mutant.</title>
        <authorList>
            <person name="Chapon C."/>
            <person name="Legrain P."/>
        </authorList>
    </citation>
    <scope>NUCLEOTIDE SEQUENCE [GENOMIC DNA]</scope>
    <scope>MUTANT SPP91-1</scope>
    <source>
        <strain>CY183</strain>
    </source>
</reference>
<reference key="2">
    <citation type="journal article" date="1993" name="Proc. Natl. Acad. Sci. U.S.A.">
        <title>The Saccharomyces cerevisiae PRP21 gene product is an integral component of the prespliceosome.</title>
        <authorList>
            <person name="Arenas J.E."/>
            <person name="Abelson J.N."/>
        </authorList>
    </citation>
    <scope>NUCLEOTIDE SEQUENCE [GENOMIC DNA]</scope>
</reference>
<reference key="3">
    <citation type="journal article" date="1994" name="Yeast">
        <title>The sequence of a 36 kb segment on the left arm of yeast chromosome X identifies 24 open reading frames including NUC1, PRP21 (SPP91), CDC6, CRY2, the gene for S24, a homologue to the aconitase gene ACO1 and two homologues to chromosome III genes.</title>
        <authorList>
            <person name="Purnelle B."/>
            <person name="Coster F."/>
            <person name="Goffeau A."/>
        </authorList>
    </citation>
    <scope>NUCLEOTIDE SEQUENCE [GENOMIC DNA]</scope>
    <source>
        <strain>ATCC 204508 / S288c</strain>
    </source>
</reference>
<reference key="4">
    <citation type="journal article" date="1996" name="EMBO J.">
        <title>Complete nucleotide sequence of Saccharomyces cerevisiae chromosome X.</title>
        <authorList>
            <person name="Galibert F."/>
            <person name="Alexandraki D."/>
            <person name="Baur A."/>
            <person name="Boles E."/>
            <person name="Chalwatzis N."/>
            <person name="Chuat J.-C."/>
            <person name="Coster F."/>
            <person name="Cziepluch C."/>
            <person name="de Haan M."/>
            <person name="Domdey H."/>
            <person name="Durand P."/>
            <person name="Entian K.-D."/>
            <person name="Gatius M."/>
            <person name="Goffeau A."/>
            <person name="Grivell L.A."/>
            <person name="Hennemann A."/>
            <person name="Herbert C.J."/>
            <person name="Heumann K."/>
            <person name="Hilger F."/>
            <person name="Hollenberg C.P."/>
            <person name="Huang M.-E."/>
            <person name="Jacq C."/>
            <person name="Jauniaux J.-C."/>
            <person name="Katsoulou C."/>
            <person name="Kirchrath L."/>
            <person name="Kleine K."/>
            <person name="Kordes E."/>
            <person name="Koetter P."/>
            <person name="Liebl S."/>
            <person name="Louis E.J."/>
            <person name="Manus V."/>
            <person name="Mewes H.-W."/>
            <person name="Miosga T."/>
            <person name="Obermaier B."/>
            <person name="Perea J."/>
            <person name="Pohl T.M."/>
            <person name="Portetelle D."/>
            <person name="Pujol A."/>
            <person name="Purnelle B."/>
            <person name="Ramezani Rad M."/>
            <person name="Rasmussen S.W."/>
            <person name="Rose M."/>
            <person name="Rossau R."/>
            <person name="Schaaff-Gerstenschlaeger I."/>
            <person name="Smits P.H.M."/>
            <person name="Scarcez T."/>
            <person name="Soriano N."/>
            <person name="To Van D."/>
            <person name="Tzermia M."/>
            <person name="Van Broekhoven A."/>
            <person name="Vandenbol M."/>
            <person name="Wedler H."/>
            <person name="von Wettstein D."/>
            <person name="Wambutt R."/>
            <person name="Zagulski M."/>
            <person name="Zollner A."/>
            <person name="Karpfinger-Hartl L."/>
        </authorList>
    </citation>
    <scope>NUCLEOTIDE SEQUENCE [LARGE SCALE GENOMIC DNA]</scope>
    <source>
        <strain>ATCC 204508 / S288c</strain>
    </source>
</reference>
<reference key="5">
    <citation type="journal article" date="2014" name="G3 (Bethesda)">
        <title>The reference genome sequence of Saccharomyces cerevisiae: Then and now.</title>
        <authorList>
            <person name="Engel S.R."/>
            <person name="Dietrich F.S."/>
            <person name="Fisk D.G."/>
            <person name="Binkley G."/>
            <person name="Balakrishnan R."/>
            <person name="Costanzo M.C."/>
            <person name="Dwight S.S."/>
            <person name="Hitz B.C."/>
            <person name="Karra K."/>
            <person name="Nash R.S."/>
            <person name="Weng S."/>
            <person name="Wong E.D."/>
            <person name="Lloyd P."/>
            <person name="Skrzypek M.S."/>
            <person name="Miyasato S.R."/>
            <person name="Simison M."/>
            <person name="Cherry J.M."/>
        </authorList>
    </citation>
    <scope>GENOME REANNOTATION</scope>
    <source>
        <strain>ATCC 204508 / S288c</strain>
    </source>
</reference>
<reference key="6">
    <citation type="journal article" date="2007" name="Genome Res.">
        <title>Approaching a complete repository of sequence-verified protein-encoding clones for Saccharomyces cerevisiae.</title>
        <authorList>
            <person name="Hu Y."/>
            <person name="Rolfs A."/>
            <person name="Bhullar B."/>
            <person name="Murthy T.V.S."/>
            <person name="Zhu C."/>
            <person name="Berger M.F."/>
            <person name="Camargo A.A."/>
            <person name="Kelley F."/>
            <person name="McCarron S."/>
            <person name="Jepson D."/>
            <person name="Richardson A."/>
            <person name="Raphael J."/>
            <person name="Moreira D."/>
            <person name="Taycher E."/>
            <person name="Zuo D."/>
            <person name="Mohr S."/>
            <person name="Kane M.F."/>
            <person name="Williamson J."/>
            <person name="Simpson A.J.G."/>
            <person name="Bulyk M.L."/>
            <person name="Harlow E."/>
            <person name="Marsischky G."/>
            <person name="Kolodner R.D."/>
            <person name="LaBaer J."/>
        </authorList>
    </citation>
    <scope>NUCLEOTIDE SEQUENCE [GENOMIC DNA]</scope>
    <source>
        <strain>ATCC 204508 / S288c</strain>
    </source>
</reference>
<reference key="7">
    <citation type="journal article" date="2002" name="Mol. Cell. Biol.">
        <title>Proteomics analysis reveals stable multiprotein complexes in both fission and budding yeasts containing Myb-related Cdc5p/Cef1p, novel pre-mRNA splicing factors, and snRNAs.</title>
        <authorList>
            <person name="Ohi M.D."/>
            <person name="Link A.J."/>
            <person name="Ren L."/>
            <person name="Jennings J.L."/>
            <person name="McDonald W.H."/>
            <person name="Gould K.L."/>
        </authorList>
    </citation>
    <scope>IDENTIFICATION IN THE CWC COMPLEX</scope>
    <scope>IDENTIFICATION BY MASS SPECTROMETRY</scope>
</reference>
<reference key="8">
    <citation type="journal article" date="2003" name="Nature">
        <title>Global analysis of protein expression in yeast.</title>
        <authorList>
            <person name="Ghaemmaghami S."/>
            <person name="Huh W.-K."/>
            <person name="Bower K."/>
            <person name="Howson R.W."/>
            <person name="Belle A."/>
            <person name="Dephoure N."/>
            <person name="O'Shea E.K."/>
            <person name="Weissman J.S."/>
        </authorList>
    </citation>
    <scope>LEVEL OF PROTEIN EXPRESSION [LARGE SCALE ANALYSIS]</scope>
</reference>
<reference key="9">
    <citation type="journal article" date="2008" name="Mol. Cell. Proteomics">
        <title>A multidimensional chromatography technology for in-depth phosphoproteome analysis.</title>
        <authorList>
            <person name="Albuquerque C.P."/>
            <person name="Smolka M.B."/>
            <person name="Payne S.H."/>
            <person name="Bafna V."/>
            <person name="Eng J."/>
            <person name="Zhou H."/>
        </authorList>
    </citation>
    <scope>IDENTIFICATION BY MASS SPECTROMETRY [LARGE SCALE ANALYSIS]</scope>
</reference>
<reference key="10">
    <citation type="journal article" date="2009" name="Science">
        <title>Global analysis of Cdk1 substrate phosphorylation sites provides insights into evolution.</title>
        <authorList>
            <person name="Holt L.J."/>
            <person name="Tuch B.B."/>
            <person name="Villen J."/>
            <person name="Johnson A.D."/>
            <person name="Gygi S.P."/>
            <person name="Morgan D.O."/>
        </authorList>
    </citation>
    <scope>IDENTIFICATION BY MASS SPECTROMETRY [LARGE SCALE ANALYSIS]</scope>
</reference>
<evidence type="ECO:0000256" key="1">
    <source>
        <dbReference type="SAM" id="MobiDB-lite"/>
    </source>
</evidence>
<evidence type="ECO:0000269" key="2">
    <source>
    </source>
</evidence>
<evidence type="ECO:0000269" key="3">
    <source>
    </source>
</evidence>
<evidence type="ECO:0000305" key="4"/>
<evidence type="ECO:0007829" key="5">
    <source>
        <dbReference type="PDB" id="4DGW"/>
    </source>
</evidence>
<name>PRP21_YEAST</name>
<organism>
    <name type="scientific">Saccharomyces cerevisiae (strain ATCC 204508 / S288c)</name>
    <name type="common">Baker's yeast</name>
    <dbReference type="NCBI Taxonomy" id="559292"/>
    <lineage>
        <taxon>Eukaryota</taxon>
        <taxon>Fungi</taxon>
        <taxon>Dikarya</taxon>
        <taxon>Ascomycota</taxon>
        <taxon>Saccharomycotina</taxon>
        <taxon>Saccharomycetes</taxon>
        <taxon>Saccharomycetales</taxon>
        <taxon>Saccharomycetaceae</taxon>
        <taxon>Saccharomyces</taxon>
    </lineage>
</organism>
<feature type="chain" id="PRO_0000174322" description="Pre-mRNA-splicing factor PRP21">
    <location>
        <begin position="1"/>
        <end position="280"/>
    </location>
</feature>
<feature type="repeat" description="SURP motif 1">
    <location>
        <begin position="11"/>
        <end position="49"/>
    </location>
</feature>
<feature type="repeat" description="SURP motif 2">
    <location>
        <begin position="95"/>
        <end position="135"/>
    </location>
</feature>
<feature type="region of interest" description="Disordered" evidence="1">
    <location>
        <begin position="53"/>
        <end position="72"/>
    </location>
</feature>
<feature type="region of interest" description="Disordered" evidence="1">
    <location>
        <begin position="246"/>
        <end position="280"/>
    </location>
</feature>
<feature type="compositionally biased region" description="Basic and acidic residues" evidence="1">
    <location>
        <begin position="246"/>
        <end position="261"/>
    </location>
</feature>
<feature type="compositionally biased region" description="Basic and acidic residues" evidence="1">
    <location>
        <begin position="269"/>
        <end position="280"/>
    </location>
</feature>
<feature type="mutagenesis site" description="In SPP91-1; corrects the PRP9-1 growth defect through partial restoration of splicing and by a complete reversion of the pre-mRNA escape phenotype.">
    <original>T</original>
    <variation>A</variation>
    <location>
        <position position="168"/>
    </location>
</feature>
<feature type="sequence conflict" description="In Ref. 6; AAS56405." evidence="4" ref="6">
    <original>K</original>
    <variation>N</variation>
    <location>
        <position position="205"/>
    </location>
</feature>
<feature type="helix" evidence="5">
    <location>
        <begin position="90"/>
        <end position="103"/>
    </location>
</feature>
<feature type="helix" evidence="5">
    <location>
        <begin position="109"/>
        <end position="116"/>
    </location>
</feature>
<feature type="helix" evidence="5">
    <location>
        <begin position="123"/>
        <end position="125"/>
    </location>
</feature>
<feature type="helix" evidence="5">
    <location>
        <begin position="132"/>
        <end position="145"/>
    </location>
</feature>
<feature type="helix" evidence="5">
    <location>
        <begin position="157"/>
        <end position="193"/>
    </location>
</feature>
<feature type="turn" evidence="5">
    <location>
        <begin position="222"/>
        <end position="224"/>
    </location>
</feature>
<dbReference type="EMBL" id="X67564">
    <property type="protein sequence ID" value="CAA47860.1"/>
    <property type="molecule type" value="Genomic_DNA"/>
</dbReference>
<dbReference type="EMBL" id="L07744">
    <property type="protein sequence ID" value="AAB09601.1"/>
    <property type="molecule type" value="Genomic_DNA"/>
</dbReference>
<dbReference type="EMBL" id="X77688">
    <property type="protein sequence ID" value="CAA54754.1"/>
    <property type="molecule type" value="Genomic_DNA"/>
</dbReference>
<dbReference type="EMBL" id="Z49478">
    <property type="protein sequence ID" value="CAA89497.1"/>
    <property type="molecule type" value="Genomic_DNA"/>
</dbReference>
<dbReference type="EMBL" id="AY558079">
    <property type="protein sequence ID" value="AAS56405.1"/>
    <property type="molecule type" value="Genomic_DNA"/>
</dbReference>
<dbReference type="EMBL" id="BK006943">
    <property type="protein sequence ID" value="DAA08607.1"/>
    <property type="molecule type" value="Genomic_DNA"/>
</dbReference>
<dbReference type="PIR" id="S23553">
    <property type="entry name" value="S23553"/>
</dbReference>
<dbReference type="RefSeq" id="NP_012332.1">
    <property type="nucleotide sequence ID" value="NM_001181636.1"/>
</dbReference>
<dbReference type="PDB" id="4DGW">
    <property type="method" value="X-ray"/>
    <property type="resolution" value="3.11 A"/>
    <property type="chains" value="B=87-237"/>
</dbReference>
<dbReference type="PDB" id="5NRL">
    <property type="method" value="EM"/>
    <property type="resolution" value="7.20 A"/>
    <property type="chains" value="V=1-280"/>
</dbReference>
<dbReference type="PDB" id="5ZWM">
    <property type="method" value="EM"/>
    <property type="resolution" value="3.40 A"/>
    <property type="chains" value="w=1-280"/>
</dbReference>
<dbReference type="PDB" id="5ZWO">
    <property type="method" value="EM"/>
    <property type="resolution" value="3.90 A"/>
    <property type="chains" value="w=1-280"/>
</dbReference>
<dbReference type="PDB" id="6G90">
    <property type="method" value="EM"/>
    <property type="resolution" value="4.00 A"/>
    <property type="chains" value="V=1-280"/>
</dbReference>
<dbReference type="PDB" id="7DCO">
    <property type="method" value="EM"/>
    <property type="resolution" value="2.50 A"/>
    <property type="chains" value="w=1-280"/>
</dbReference>
<dbReference type="PDB" id="7OQB">
    <property type="method" value="EM"/>
    <property type="resolution" value="9.00 A"/>
    <property type="chains" value="V=1-280"/>
</dbReference>
<dbReference type="PDB" id="7OQE">
    <property type="method" value="EM"/>
    <property type="resolution" value="5.90 A"/>
    <property type="chains" value="V=1-280"/>
</dbReference>
<dbReference type="PDBsum" id="4DGW"/>
<dbReference type="PDBsum" id="5NRL"/>
<dbReference type="PDBsum" id="5ZWM"/>
<dbReference type="PDBsum" id="5ZWO"/>
<dbReference type="PDBsum" id="6G90"/>
<dbReference type="PDBsum" id="7DCO"/>
<dbReference type="PDBsum" id="7OQB"/>
<dbReference type="PDBsum" id="7OQE"/>
<dbReference type="EMDB" id="EMD-13028"/>
<dbReference type="EMDB" id="EMD-13033"/>
<dbReference type="EMDB" id="EMD-30637"/>
<dbReference type="EMDB" id="EMD-3683"/>
<dbReference type="EMDB" id="EMD-4364"/>
<dbReference type="EMDB" id="EMD-6972"/>
<dbReference type="EMDB" id="EMD-6974"/>
<dbReference type="SMR" id="P32524"/>
<dbReference type="BioGRID" id="33555">
    <property type="interactions" value="355"/>
</dbReference>
<dbReference type="ComplexPortal" id="CPX-1648">
    <property type="entry name" value="SF3A complex"/>
</dbReference>
<dbReference type="ComplexPortal" id="CPX-1651">
    <property type="entry name" value="PRP19-associated complex"/>
</dbReference>
<dbReference type="ComplexPortal" id="CPX-26">
    <property type="entry name" value="U2 small nuclear ribonucleoprotein complex"/>
</dbReference>
<dbReference type="DIP" id="DIP-689N"/>
<dbReference type="FunCoup" id="P32524">
    <property type="interactions" value="245"/>
</dbReference>
<dbReference type="IntAct" id="P32524">
    <property type="interactions" value="55"/>
</dbReference>
<dbReference type="MINT" id="P32524"/>
<dbReference type="STRING" id="4932.YJL203W"/>
<dbReference type="iPTMnet" id="P32524"/>
<dbReference type="PaxDb" id="4932-YJL203W"/>
<dbReference type="PeptideAtlas" id="P32524"/>
<dbReference type="EnsemblFungi" id="YJL203W_mRNA">
    <property type="protein sequence ID" value="YJL203W"/>
    <property type="gene ID" value="YJL203W"/>
</dbReference>
<dbReference type="GeneID" id="853227"/>
<dbReference type="KEGG" id="sce:YJL203W"/>
<dbReference type="AGR" id="SGD:S000003739"/>
<dbReference type="SGD" id="S000003739">
    <property type="gene designation" value="PRP21"/>
</dbReference>
<dbReference type="VEuPathDB" id="FungiDB:YJL203W"/>
<dbReference type="eggNOG" id="KOG0007">
    <property type="taxonomic scope" value="Eukaryota"/>
</dbReference>
<dbReference type="GeneTree" id="ENSGT00730000111077"/>
<dbReference type="HOGENOM" id="CLU_013259_0_0_1"/>
<dbReference type="InParanoid" id="P32524"/>
<dbReference type="OMA" id="QMISKDG"/>
<dbReference type="OrthoDB" id="447637at2759"/>
<dbReference type="BioCyc" id="YEAST:G3O-31631-MONOMER"/>
<dbReference type="BioGRID-ORCS" id="853227">
    <property type="hits" value="9 hits in 10 CRISPR screens"/>
</dbReference>
<dbReference type="EvolutionaryTrace" id="P32524"/>
<dbReference type="PRO" id="PR:P32524"/>
<dbReference type="Proteomes" id="UP000002311">
    <property type="component" value="Chromosome X"/>
</dbReference>
<dbReference type="RNAct" id="P32524">
    <property type="molecule type" value="protein"/>
</dbReference>
<dbReference type="GO" id="GO:0071013">
    <property type="term" value="C:catalytic step 2 spliceosome"/>
    <property type="evidence" value="ECO:0000318"/>
    <property type="project" value="GO_Central"/>
</dbReference>
<dbReference type="GO" id="GO:0005634">
    <property type="term" value="C:nucleus"/>
    <property type="evidence" value="ECO:0000303"/>
    <property type="project" value="ComplexPortal"/>
</dbReference>
<dbReference type="GO" id="GO:0000974">
    <property type="term" value="C:Prp19 complex"/>
    <property type="evidence" value="ECO:0000353"/>
    <property type="project" value="ComplexPortal"/>
</dbReference>
<dbReference type="GO" id="GO:0005681">
    <property type="term" value="C:spliceosomal complex"/>
    <property type="evidence" value="ECO:0000303"/>
    <property type="project" value="ComplexPortal"/>
</dbReference>
<dbReference type="GO" id="GO:0005686">
    <property type="term" value="C:U2 snRNP"/>
    <property type="evidence" value="ECO:0000318"/>
    <property type="project" value="GO_Central"/>
</dbReference>
<dbReference type="GO" id="GO:0071004">
    <property type="term" value="C:U2-type prespliceosome"/>
    <property type="evidence" value="ECO:0000314"/>
    <property type="project" value="SGD"/>
</dbReference>
<dbReference type="GO" id="GO:0003723">
    <property type="term" value="F:RNA binding"/>
    <property type="evidence" value="ECO:0000314"/>
    <property type="project" value="SGD"/>
</dbReference>
<dbReference type="GO" id="GO:0045292">
    <property type="term" value="P:mRNA cis splicing, via spliceosome"/>
    <property type="evidence" value="ECO:0007669"/>
    <property type="project" value="InterPro"/>
</dbReference>
<dbReference type="GO" id="GO:0000398">
    <property type="term" value="P:mRNA splicing, via spliceosome"/>
    <property type="evidence" value="ECO:0000314"/>
    <property type="project" value="SGD"/>
</dbReference>
<dbReference type="GO" id="GO:1903241">
    <property type="term" value="P:U2-type prespliceosome assembly"/>
    <property type="evidence" value="ECO:0000303"/>
    <property type="project" value="ComplexPortal"/>
</dbReference>
<dbReference type="Gene3D" id="6.10.250.1320">
    <property type="match status" value="1"/>
</dbReference>
<dbReference type="Gene3D" id="1.10.10.790">
    <property type="entry name" value="Surp module"/>
    <property type="match status" value="2"/>
</dbReference>
<dbReference type="InterPro" id="IPR045146">
    <property type="entry name" value="SF3A1"/>
</dbReference>
<dbReference type="InterPro" id="IPR022030">
    <property type="entry name" value="SF3A1_dom"/>
</dbReference>
<dbReference type="InterPro" id="IPR000061">
    <property type="entry name" value="Surp"/>
</dbReference>
<dbReference type="InterPro" id="IPR035967">
    <property type="entry name" value="SWAP/Surp_sf"/>
</dbReference>
<dbReference type="PANTHER" id="PTHR15316">
    <property type="entry name" value="SPLICEOSOME ASSOCIATED PROTEIN 114/SWAP SPLICING FACTOR-RELATED"/>
    <property type="match status" value="1"/>
</dbReference>
<dbReference type="PANTHER" id="PTHR15316:SF1">
    <property type="entry name" value="SPLICING FACTOR 3A SUBUNIT 1"/>
    <property type="match status" value="1"/>
</dbReference>
<dbReference type="Pfam" id="PF12230">
    <property type="entry name" value="PRP21_like_P"/>
    <property type="match status" value="1"/>
</dbReference>
<dbReference type="Pfam" id="PF01805">
    <property type="entry name" value="Surp"/>
    <property type="match status" value="2"/>
</dbReference>
<dbReference type="SMART" id="SM00648">
    <property type="entry name" value="SWAP"/>
    <property type="match status" value="2"/>
</dbReference>
<dbReference type="SUPFAM" id="SSF109905">
    <property type="entry name" value="Surp module (SWAP domain)"/>
    <property type="match status" value="2"/>
</dbReference>
<dbReference type="PROSITE" id="PS50128">
    <property type="entry name" value="SURP"/>
    <property type="match status" value="2"/>
</dbReference>